<feature type="chain" id="PRO_0000232600" description="Aminoacyltransferase FemA">
    <location>
        <begin position="1"/>
        <end position="420"/>
    </location>
</feature>
<accession>Q99UA7</accession>
<comment type="function">
    <text evidence="1">Catalyzes the formation of the pentaglycine interpeptide bridge, which is characteristic of the S.aureus peptidoglycan. Adds glycines 2 and 3 of the pentaglycine bridge, using glycyl-tRNA(Gly) as donor. Involved in resistance to methicillin (By similarity).</text>
</comment>
<comment type="catalytic activity">
    <reaction>
        <text>beta-D-GlcNAc-(1-&gt;4)-Mur2Ac(oyl-L-Ala-D-isoglutaminyl-L-Lys-(N(6)-Gly)-D-Ala-D-Ala)-di-trans,octa-cis-undecaprenyl diphosphate + 2 glycyl-tRNA(Gly) = MurNAc-L-Ala-D-isoglutaminyl-L-Lys-(N(6)-tri-Gly)-D-Ala-D-Ala-diphospho-di-trans,octa-cis-undecaprenyl-GlcNAc + 2 tRNA(Gly) + 2 H(+)</text>
        <dbReference type="Rhea" id="RHEA:30439"/>
        <dbReference type="Rhea" id="RHEA-COMP:9664"/>
        <dbReference type="Rhea" id="RHEA-COMP:9683"/>
        <dbReference type="ChEBI" id="CHEBI:15378"/>
        <dbReference type="ChEBI" id="CHEBI:62234"/>
        <dbReference type="ChEBI" id="CHEBI:62235"/>
        <dbReference type="ChEBI" id="CHEBI:78442"/>
        <dbReference type="ChEBI" id="CHEBI:78522"/>
        <dbReference type="EC" id="2.3.2.17"/>
    </reaction>
</comment>
<comment type="subunit">
    <text evidence="1">Homodimer. Interacts with FemB (By similarity).</text>
</comment>
<comment type="subcellular location">
    <subcellularLocation>
        <location evidence="1">Cytoplasm</location>
    </subcellularLocation>
</comment>
<comment type="similarity">
    <text evidence="2">Belongs to the FemABX family.</text>
</comment>
<organism>
    <name type="scientific">Staphylococcus aureus (strain Mu50 / ATCC 700699)</name>
    <dbReference type="NCBI Taxonomy" id="158878"/>
    <lineage>
        <taxon>Bacteria</taxon>
        <taxon>Bacillati</taxon>
        <taxon>Bacillota</taxon>
        <taxon>Bacilli</taxon>
        <taxon>Bacillales</taxon>
        <taxon>Staphylococcaceae</taxon>
        <taxon>Staphylococcus</taxon>
    </lineage>
</organism>
<dbReference type="EC" id="2.3.2.17"/>
<dbReference type="EMBL" id="BA000017">
    <property type="protein sequence ID" value="BAB57536.1"/>
    <property type="molecule type" value="Genomic_DNA"/>
</dbReference>
<dbReference type="RefSeq" id="WP_000673315.1">
    <property type="nucleotide sequence ID" value="NC_002758.2"/>
</dbReference>
<dbReference type="SMR" id="Q99UA7"/>
<dbReference type="KEGG" id="sav:SAV1374"/>
<dbReference type="HOGENOM" id="CLU_048411_1_0_9"/>
<dbReference type="PhylomeDB" id="Q99UA7"/>
<dbReference type="Proteomes" id="UP000002481">
    <property type="component" value="Chromosome"/>
</dbReference>
<dbReference type="GO" id="GO:0005737">
    <property type="term" value="C:cytoplasm"/>
    <property type="evidence" value="ECO:0007669"/>
    <property type="project" value="UniProtKB-SubCell"/>
</dbReference>
<dbReference type="GO" id="GO:0016755">
    <property type="term" value="F:aminoacyltransferase activity"/>
    <property type="evidence" value="ECO:0007669"/>
    <property type="project" value="InterPro"/>
</dbReference>
<dbReference type="GO" id="GO:0000166">
    <property type="term" value="F:nucleotide binding"/>
    <property type="evidence" value="ECO:0007669"/>
    <property type="project" value="InterPro"/>
</dbReference>
<dbReference type="GO" id="GO:0071555">
    <property type="term" value="P:cell wall organization"/>
    <property type="evidence" value="ECO:0007669"/>
    <property type="project" value="UniProtKB-KW"/>
</dbReference>
<dbReference type="GO" id="GO:0009252">
    <property type="term" value="P:peptidoglycan biosynthetic process"/>
    <property type="evidence" value="ECO:0007669"/>
    <property type="project" value="UniProtKB-KW"/>
</dbReference>
<dbReference type="GO" id="GO:0008360">
    <property type="term" value="P:regulation of cell shape"/>
    <property type="evidence" value="ECO:0007669"/>
    <property type="project" value="UniProtKB-KW"/>
</dbReference>
<dbReference type="GO" id="GO:0046677">
    <property type="term" value="P:response to antibiotic"/>
    <property type="evidence" value="ECO:0007669"/>
    <property type="project" value="UniProtKB-KW"/>
</dbReference>
<dbReference type="Gene3D" id="1.20.58.90">
    <property type="match status" value="1"/>
</dbReference>
<dbReference type="Gene3D" id="3.40.630.30">
    <property type="match status" value="2"/>
</dbReference>
<dbReference type="InterPro" id="IPR016181">
    <property type="entry name" value="Acyl_CoA_acyltransferase"/>
</dbReference>
<dbReference type="InterPro" id="IPR003447">
    <property type="entry name" value="FEMABX"/>
</dbReference>
<dbReference type="InterPro" id="IPR050644">
    <property type="entry name" value="PG_Glycine_Bridge_Synth"/>
</dbReference>
<dbReference type="InterPro" id="IPR010978">
    <property type="entry name" value="tRNA-bd_arm"/>
</dbReference>
<dbReference type="PANTHER" id="PTHR36174:SF2">
    <property type="entry name" value="AMINOACYLTRANSFERASE FEMA"/>
    <property type="match status" value="1"/>
</dbReference>
<dbReference type="PANTHER" id="PTHR36174">
    <property type="entry name" value="LIPID II:GLYCINE GLYCYLTRANSFERASE"/>
    <property type="match status" value="1"/>
</dbReference>
<dbReference type="Pfam" id="PF02388">
    <property type="entry name" value="FemAB"/>
    <property type="match status" value="1"/>
</dbReference>
<dbReference type="SUPFAM" id="SSF55729">
    <property type="entry name" value="Acyl-CoA N-acyltransferases (Nat)"/>
    <property type="match status" value="2"/>
</dbReference>
<dbReference type="SUPFAM" id="SSF46589">
    <property type="entry name" value="tRNA-binding arm"/>
    <property type="match status" value="1"/>
</dbReference>
<dbReference type="PROSITE" id="PS51191">
    <property type="entry name" value="FEMABX"/>
    <property type="match status" value="1"/>
</dbReference>
<gene>
    <name type="primary">femA</name>
    <name type="ordered locus">SAV1374</name>
</gene>
<sequence length="420" mass="49140">MKFTNLTAKEFGAFTDSMPYSHFTQTVGHYELKLAEGYETHLVGIKNNNNEVIAACLLTAVPVMKVFKYFYSNRGPVIDYENQELVHFFFNELSKYVKKHRCLYLHIDPYLPYQYLNHDGEITGNAGNDWFFDKMSNLGFEHTGFHKGFDPVLQIRYHSVLDLKDKTADDIIKNMDGLRKRNTKKVKKNGVKVRYLSEEELPIFRSFMEDTSESKAFADRDDKFYYNRLKYYKDRVLVPLAYINFDEYIKELNEERDILNKDLNKALKDIEKRPENKKAHNKRDNLQQQLDANEQKIEEGKRLQEEHGNELPISAGFFFINPFEVVYYAGGTSNAFRHFAGSYAVQWEMINYALNHGIDRYNFYGVSGKFTEDAEDAGVVKFKKGYNAEIIEYVGDFIKPINKPVYAAYTALKKVKDRIF</sequence>
<keyword id="KW-0012">Acyltransferase</keyword>
<keyword id="KW-0046">Antibiotic resistance</keyword>
<keyword id="KW-0133">Cell shape</keyword>
<keyword id="KW-0961">Cell wall biogenesis/degradation</keyword>
<keyword id="KW-0963">Cytoplasm</keyword>
<keyword id="KW-0573">Peptidoglycan synthesis</keyword>
<keyword id="KW-0808">Transferase</keyword>
<protein>
    <recommendedName>
        <fullName>Aminoacyltransferase FemA</fullName>
        <ecNumber>2.3.2.17</ecNumber>
    </recommendedName>
    <alternativeName>
        <fullName>Factor essential for expression of methicillin resistance A</fullName>
    </alternativeName>
    <alternativeName>
        <fullName>N-acetylmuramoyl-L-alanyl-D-glutamyl-L-lysyl-(N6-glycyl)-D-alanyl-D-alanine-diphosphoundecaprenyl-N-acetylglucosamine:glycine glycyltransferase</fullName>
    </alternativeName>
</protein>
<name>FEMA_STAAM</name>
<evidence type="ECO:0000250" key="1"/>
<evidence type="ECO:0000305" key="2"/>
<reference key="1">
    <citation type="journal article" date="2001" name="Lancet">
        <title>Whole genome sequencing of meticillin-resistant Staphylococcus aureus.</title>
        <authorList>
            <person name="Kuroda M."/>
            <person name="Ohta T."/>
            <person name="Uchiyama I."/>
            <person name="Baba T."/>
            <person name="Yuzawa H."/>
            <person name="Kobayashi I."/>
            <person name="Cui L."/>
            <person name="Oguchi A."/>
            <person name="Aoki K."/>
            <person name="Nagai Y."/>
            <person name="Lian J.-Q."/>
            <person name="Ito T."/>
            <person name="Kanamori M."/>
            <person name="Matsumaru H."/>
            <person name="Maruyama A."/>
            <person name="Murakami H."/>
            <person name="Hosoyama A."/>
            <person name="Mizutani-Ui Y."/>
            <person name="Takahashi N.K."/>
            <person name="Sawano T."/>
            <person name="Inoue R."/>
            <person name="Kaito C."/>
            <person name="Sekimizu K."/>
            <person name="Hirakawa H."/>
            <person name="Kuhara S."/>
            <person name="Goto S."/>
            <person name="Yabuzaki J."/>
            <person name="Kanehisa M."/>
            <person name="Yamashita A."/>
            <person name="Oshima K."/>
            <person name="Furuya K."/>
            <person name="Yoshino C."/>
            <person name="Shiba T."/>
            <person name="Hattori M."/>
            <person name="Ogasawara N."/>
            <person name="Hayashi H."/>
            <person name="Hiramatsu K."/>
        </authorList>
    </citation>
    <scope>NUCLEOTIDE SEQUENCE [LARGE SCALE GENOMIC DNA]</scope>
    <source>
        <strain>Mu50 / ATCC 700699</strain>
    </source>
</reference>
<proteinExistence type="inferred from homology"/>